<gene>
    <name type="primary">apxIIIB</name>
    <name type="synonym">clyIIIB</name>
    <name type="synonym">rtxB</name>
</gene>
<sequence>MESQMPFNEKIDYGLHALVILAQYHNVAVNPEEVKHKFDLDGKGLDLVAWLLAAKSLELKMKRVKKSIERLPFIHLPALIWRDDGQHVILMKIDTQTNRYLIFDLEERNPKVLSAAEFHEIFQGGMILITSRASIMGQLAKFDFTWFIPAVIKYRKIFVETIIVSIFLQLFALITPLFFQVVMDKVLVHRGFSTLNVITVALSVVVIFEIVLSGLRTYIFSHSTSRIDVELGAKLFRHLLALPISYFENRRVGDTVARVRELDQIRNFLTGQALTSVLDLLFSFIFFAVMWYYSPKLTIVILLSLPCYIAWSIFISPILRRRLDEKFARNADNQSFLVESVSAIDTIKALAVTPQMTNIWDKQLASYVSADFRVTVLATIGQQGVQLIQKTVMIINLWLGAHLVISGDLSIGQLITFNMLSGQVIAPVVRLAQLWQDFQQVGISITRLGDVLNSPTENYQGKLSLPEIFGDIAFKHIRFRYKPDAPIILDDVNLSVKQGEVIGIVGRSGSGKSTLTKLLQRFYIPENGQVLIDGHDLALADPNWLRRQIGVVLQDNVLLNRSIRDNIALTDPSMSMERVIYAAKLAGAHDFISELREGYNTIVGELGAGLSGGQRQRIAIARALVNNPRILIFDEATSALDYESEHIIMQNMQKICHGRTVIIIAHRLSTVKNADRIIVMEKGHIVEQGKHNQLLENENGLYYYLNQLQSN</sequence>
<organism>
    <name type="scientific">Actinobacillus pleuropneumoniae</name>
    <name type="common">Haemophilus pleuropneumoniae</name>
    <dbReference type="NCBI Taxonomy" id="715"/>
    <lineage>
        <taxon>Bacteria</taxon>
        <taxon>Pseudomonadati</taxon>
        <taxon>Pseudomonadota</taxon>
        <taxon>Gammaproteobacteria</taxon>
        <taxon>Pasteurellales</taxon>
        <taxon>Pasteurellaceae</taxon>
        <taxon>Actinobacillus</taxon>
    </lineage>
</organism>
<protein>
    <recommendedName>
        <fullName>Toxin RTX-III translocation ATP-binding protein</fullName>
    </recommendedName>
    <alternativeName>
        <fullName>APX-IIIB</fullName>
    </alternativeName>
    <alternativeName>
        <fullName>Cytolysin IIIB</fullName>
        <shortName>CLY-IIIB</shortName>
    </alternativeName>
    <alternativeName>
        <fullName>RTX-III toxin determinant B</fullName>
    </alternativeName>
</protein>
<name>RTX3B_ACTPL</name>
<feature type="chain" id="PRO_0000092391" description="Toxin RTX-III translocation ATP-binding protein">
    <location>
        <begin position="1"/>
        <end position="711"/>
    </location>
</feature>
<feature type="transmembrane region" description="Helical" evidence="4">
    <location>
        <begin position="162"/>
        <end position="182"/>
    </location>
</feature>
<feature type="transmembrane region" description="Helical" evidence="4">
    <location>
        <begin position="195"/>
        <end position="215"/>
    </location>
</feature>
<feature type="transmembrane region" description="Helical" evidence="4">
    <location>
        <begin position="273"/>
        <end position="293"/>
    </location>
</feature>
<feature type="transmembrane region" description="Helical" evidence="4">
    <location>
        <begin position="299"/>
        <end position="319"/>
    </location>
</feature>
<feature type="transmembrane region" description="Helical" evidence="4">
    <location>
        <begin position="392"/>
        <end position="412"/>
    </location>
</feature>
<feature type="domain" description="Peptidase C39" evidence="2">
    <location>
        <begin position="1"/>
        <end position="129"/>
    </location>
</feature>
<feature type="domain" description="ABC transmembrane type-1" evidence="4">
    <location>
        <begin position="158"/>
        <end position="440"/>
    </location>
</feature>
<feature type="domain" description="ABC transporter" evidence="2 3">
    <location>
        <begin position="472"/>
        <end position="707"/>
    </location>
</feature>
<feature type="active site" evidence="2">
    <location>
        <position position="87"/>
    </location>
</feature>
<feature type="binding site" evidence="2 3">
    <location>
        <begin position="506"/>
        <end position="513"/>
    </location>
    <ligand>
        <name>ATP</name>
        <dbReference type="ChEBI" id="CHEBI:30616"/>
    </ligand>
</feature>
<feature type="sequence variant" description="In serotype 8.">
    <original>M</original>
    <variation>A</variation>
    <location>
        <position position="61"/>
    </location>
</feature>
<feature type="sequence variant" description="In serotype 8.">
    <original>M</original>
    <variation>T</variation>
    <location>
        <position position="91"/>
    </location>
</feature>
<feature type="sequence variant" description="In serotype 8.">
    <original>GM</original>
    <variation>DV</variation>
    <location>
        <begin position="125"/>
        <end position="126"/>
    </location>
</feature>
<feature type="sequence variant" description="In serotype 8.">
    <original>S</original>
    <variation>N</variation>
    <location>
        <position position="213"/>
    </location>
</feature>
<feature type="sequence variant" description="In serotype 8.">
    <original>T</original>
    <variation>A</variation>
    <location>
        <position position="416"/>
    </location>
</feature>
<feature type="sequence variant" description="In serotype 8.">
    <original>F</original>
    <variation>K</variation>
    <location>
        <position position="469"/>
    </location>
</feature>
<feature type="sequence variant" description="In serotype 8.">
    <original>L</original>
    <variation>Q</variation>
    <location>
        <position position="606"/>
    </location>
</feature>
<feature type="sequence variant" description="In serotype 8.">
    <original>S</original>
    <variation>R</variation>
    <location>
        <position position="638"/>
    </location>
</feature>
<accession>Q04473</accession>
<reference key="1">
    <citation type="journal article" date="1993" name="DNA Cell Biol.">
        <title>Molecular analysis of the Actinobacillus pleuropneumoniae RTX toxin-III gene cluster.</title>
        <authorList>
            <person name="Chang Y.-F."/>
            <person name="Shi J."/>
            <person name="Ma D.-P."/>
            <person name="Shin S.J."/>
            <person name="Lein D.H."/>
        </authorList>
    </citation>
    <scope>NUCLEOTIDE SEQUENCE [GENOMIC DNA]</scope>
    <source>
        <strain>Serotype 2</strain>
    </source>
</reference>
<reference key="2">
    <citation type="journal article" date="1994" name="Infect. Immun.">
        <title>Genetic map of the Actinobacillus pleuropneumoniae RTX-toxin (Apx) operons: characterization of the ApxIII operons.</title>
        <authorList>
            <person name="Jansen R."/>
            <person name="Briaire J."/>
            <person name="van Geel A.B.M."/>
            <person name="Kamp E.M."/>
            <person name="Gielkens A.L.J."/>
            <person name="Smits M.A."/>
        </authorList>
    </citation>
    <scope>NUCLEOTIDE SEQUENCE [GENOMIC DNA]</scope>
    <source>
        <strain>405 / Serotype 8</strain>
    </source>
</reference>
<reference key="3">
    <citation type="journal article" date="1993" name="Infect. Immun.">
        <title>Cloning and characterization of the Actinobacillus pleuropneumoniae-RTX-toxin III (ApxIII) gene.</title>
        <authorList>
            <person name="Jansen R."/>
            <person name="Briaire J."/>
            <person name="Kamp E.M."/>
            <person name="Gielkens A.L.J."/>
            <person name="Smits M.A."/>
        </authorList>
    </citation>
    <scope>NUCLEOTIDE SEQUENCE [GENOMIC DNA] OF 1-39</scope>
    <source>
        <strain>405 / Serotype 8</strain>
    </source>
</reference>
<comment type="function">
    <text>Involved in the transport of the toxin RTX-III.</text>
</comment>
<comment type="subunit">
    <text evidence="1">Homodimer.</text>
</comment>
<comment type="subcellular location">
    <subcellularLocation>
        <location>Cell membrane</location>
        <topology>Multi-pass membrane protein</topology>
    </subcellularLocation>
</comment>
<comment type="miscellaneous">
    <text>The sequence shown is that of serotype 2.</text>
</comment>
<comment type="similarity">
    <text evidence="5">Belongs to the ABC transporter superfamily. Protein-1 exporter (TC 3.A.1.109) family.</text>
</comment>
<comment type="caution">
    <text evidence="5">Tyr-13 is present instead of the conserved Cys which is expected to be the active site residue of peptidase C39. Thus they are presumed to be without peptidase activity.</text>
</comment>
<comment type="sequence caution" evidence="5">
    <conflict type="erroneous initiation">
        <sequence resource="EMBL-CDS" id="CAA48712"/>
    </conflict>
</comment>
<keyword id="KW-0067">ATP-binding</keyword>
<keyword id="KW-1003">Cell membrane</keyword>
<keyword id="KW-0204">Cytolysis</keyword>
<keyword id="KW-0472">Membrane</keyword>
<keyword id="KW-0547">Nucleotide-binding</keyword>
<keyword id="KW-0812">Transmembrane</keyword>
<keyword id="KW-1133">Transmembrane helix</keyword>
<keyword id="KW-0813">Transport</keyword>
<proteinExistence type="inferred from homology"/>
<dbReference type="EMBL" id="L12145">
    <property type="protein sequence ID" value="AAA21925.1"/>
    <property type="molecule type" value="Genomic_DNA"/>
</dbReference>
<dbReference type="EMBL" id="X80055">
    <property type="protein sequence ID" value="CAA56359.1"/>
    <property type="molecule type" value="Genomic_DNA"/>
</dbReference>
<dbReference type="EMBL" id="X68815">
    <property type="protein sequence ID" value="CAA48712.1"/>
    <property type="status" value="ALT_INIT"/>
    <property type="molecule type" value="Genomic_DNA"/>
</dbReference>
<dbReference type="PIR" id="S51785">
    <property type="entry name" value="C49219"/>
</dbReference>
<dbReference type="SMR" id="Q04473"/>
<dbReference type="GO" id="GO:0005886">
    <property type="term" value="C:plasma membrane"/>
    <property type="evidence" value="ECO:0007669"/>
    <property type="project" value="UniProtKB-SubCell"/>
</dbReference>
<dbReference type="GO" id="GO:0030256">
    <property type="term" value="C:type I protein secretion system complex"/>
    <property type="evidence" value="ECO:0007669"/>
    <property type="project" value="InterPro"/>
</dbReference>
<dbReference type="GO" id="GO:0140359">
    <property type="term" value="F:ABC-type transporter activity"/>
    <property type="evidence" value="ECO:0007669"/>
    <property type="project" value="InterPro"/>
</dbReference>
<dbReference type="GO" id="GO:0005524">
    <property type="term" value="F:ATP binding"/>
    <property type="evidence" value="ECO:0007669"/>
    <property type="project" value="UniProtKB-KW"/>
</dbReference>
<dbReference type="GO" id="GO:0016887">
    <property type="term" value="F:ATP hydrolysis activity"/>
    <property type="evidence" value="ECO:0007669"/>
    <property type="project" value="InterPro"/>
</dbReference>
<dbReference type="GO" id="GO:0034040">
    <property type="term" value="F:ATPase-coupled lipid transmembrane transporter activity"/>
    <property type="evidence" value="ECO:0007669"/>
    <property type="project" value="TreeGrafter"/>
</dbReference>
<dbReference type="GO" id="GO:0008233">
    <property type="term" value="F:peptidase activity"/>
    <property type="evidence" value="ECO:0007669"/>
    <property type="project" value="InterPro"/>
</dbReference>
<dbReference type="GO" id="GO:0031640">
    <property type="term" value="P:killing of cells of another organism"/>
    <property type="evidence" value="ECO:0007669"/>
    <property type="project" value="UniProtKB-KW"/>
</dbReference>
<dbReference type="GO" id="GO:0030253">
    <property type="term" value="P:protein secretion by the type I secretion system"/>
    <property type="evidence" value="ECO:0007669"/>
    <property type="project" value="InterPro"/>
</dbReference>
<dbReference type="GO" id="GO:0006508">
    <property type="term" value="P:proteolysis"/>
    <property type="evidence" value="ECO:0007669"/>
    <property type="project" value="InterPro"/>
</dbReference>
<dbReference type="CDD" id="cd18588">
    <property type="entry name" value="ABC_6TM_CyaB_HlyB_like"/>
    <property type="match status" value="1"/>
</dbReference>
<dbReference type="CDD" id="cd03252">
    <property type="entry name" value="ABCC_Hemolysin"/>
    <property type="match status" value="1"/>
</dbReference>
<dbReference type="CDD" id="cd02417">
    <property type="entry name" value="Peptidase_C39_likeA"/>
    <property type="match status" value="1"/>
</dbReference>
<dbReference type="FunFam" id="3.40.50.300:FF:000299">
    <property type="entry name" value="ABC transporter ATP-binding protein/permease"/>
    <property type="match status" value="1"/>
</dbReference>
<dbReference type="FunFam" id="1.20.1560.10:FF:000056">
    <property type="entry name" value="Alpha-hemolysin translocation ATP-binding protein HlyB"/>
    <property type="match status" value="1"/>
</dbReference>
<dbReference type="Gene3D" id="1.20.1560.10">
    <property type="entry name" value="ABC transporter type 1, transmembrane domain"/>
    <property type="match status" value="1"/>
</dbReference>
<dbReference type="Gene3D" id="3.90.70.10">
    <property type="entry name" value="Cysteine proteinases"/>
    <property type="match status" value="1"/>
</dbReference>
<dbReference type="Gene3D" id="3.40.50.300">
    <property type="entry name" value="P-loop containing nucleotide triphosphate hydrolases"/>
    <property type="match status" value="1"/>
</dbReference>
<dbReference type="InterPro" id="IPR003593">
    <property type="entry name" value="AAA+_ATPase"/>
</dbReference>
<dbReference type="InterPro" id="IPR011527">
    <property type="entry name" value="ABC1_TM_dom"/>
</dbReference>
<dbReference type="InterPro" id="IPR036640">
    <property type="entry name" value="ABC1_TM_sf"/>
</dbReference>
<dbReference type="InterPro" id="IPR003439">
    <property type="entry name" value="ABC_transporter-like_ATP-bd"/>
</dbReference>
<dbReference type="InterPro" id="IPR017871">
    <property type="entry name" value="ABC_transporter-like_CS"/>
</dbReference>
<dbReference type="InterPro" id="IPR010132">
    <property type="entry name" value="ATPase_T1SS_HlyB"/>
</dbReference>
<dbReference type="InterPro" id="IPR027417">
    <property type="entry name" value="P-loop_NTPase"/>
</dbReference>
<dbReference type="InterPro" id="IPR005074">
    <property type="entry name" value="Peptidase_C39"/>
</dbReference>
<dbReference type="InterPro" id="IPR039395">
    <property type="entry name" value="Peptidase_C39-like_A"/>
</dbReference>
<dbReference type="InterPro" id="IPR039421">
    <property type="entry name" value="Type_1_exporter"/>
</dbReference>
<dbReference type="NCBIfam" id="TIGR01846">
    <property type="entry name" value="type_I_sec_HlyB"/>
    <property type="match status" value="1"/>
</dbReference>
<dbReference type="PANTHER" id="PTHR24221">
    <property type="entry name" value="ATP-BINDING CASSETTE SUB-FAMILY B"/>
    <property type="match status" value="1"/>
</dbReference>
<dbReference type="PANTHER" id="PTHR24221:SF647">
    <property type="entry name" value="BLL6336 PROTEIN"/>
    <property type="match status" value="1"/>
</dbReference>
<dbReference type="Pfam" id="PF00664">
    <property type="entry name" value="ABC_membrane"/>
    <property type="match status" value="1"/>
</dbReference>
<dbReference type="Pfam" id="PF00005">
    <property type="entry name" value="ABC_tran"/>
    <property type="match status" value="1"/>
</dbReference>
<dbReference type="Pfam" id="PF03412">
    <property type="entry name" value="Peptidase_C39"/>
    <property type="match status" value="1"/>
</dbReference>
<dbReference type="SMART" id="SM00382">
    <property type="entry name" value="AAA"/>
    <property type="match status" value="1"/>
</dbReference>
<dbReference type="SUPFAM" id="SSF90123">
    <property type="entry name" value="ABC transporter transmembrane region"/>
    <property type="match status" value="1"/>
</dbReference>
<dbReference type="SUPFAM" id="SSF52540">
    <property type="entry name" value="P-loop containing nucleoside triphosphate hydrolases"/>
    <property type="match status" value="1"/>
</dbReference>
<dbReference type="PROSITE" id="PS50929">
    <property type="entry name" value="ABC_TM1F"/>
    <property type="match status" value="1"/>
</dbReference>
<dbReference type="PROSITE" id="PS00211">
    <property type="entry name" value="ABC_TRANSPORTER_1"/>
    <property type="match status" value="1"/>
</dbReference>
<dbReference type="PROSITE" id="PS50893">
    <property type="entry name" value="ABC_TRANSPORTER_2"/>
    <property type="match status" value="1"/>
</dbReference>
<dbReference type="PROSITE" id="PS50990">
    <property type="entry name" value="PEPTIDASE_C39"/>
    <property type="match status" value="1"/>
</dbReference>
<evidence type="ECO:0000250" key="1"/>
<evidence type="ECO:0000255" key="2">
    <source>
        <dbReference type="PROSITE-ProRule" id="PRU00362"/>
    </source>
</evidence>
<evidence type="ECO:0000255" key="3">
    <source>
        <dbReference type="PROSITE-ProRule" id="PRU00434"/>
    </source>
</evidence>
<evidence type="ECO:0000255" key="4">
    <source>
        <dbReference type="PROSITE-ProRule" id="PRU00441"/>
    </source>
</evidence>
<evidence type="ECO:0000305" key="5"/>